<evidence type="ECO:0000255" key="1">
    <source>
        <dbReference type="HAMAP-Rule" id="MF_00073"/>
    </source>
</evidence>
<organism>
    <name type="scientific">Caulobacter vibrioides (strain ATCC 19089 / CIP 103742 / CB 15)</name>
    <name type="common">Caulobacter crescentus</name>
    <dbReference type="NCBI Taxonomy" id="190650"/>
    <lineage>
        <taxon>Bacteria</taxon>
        <taxon>Pseudomonadati</taxon>
        <taxon>Pseudomonadota</taxon>
        <taxon>Alphaproteobacteria</taxon>
        <taxon>Caulobacterales</taxon>
        <taxon>Caulobacteraceae</taxon>
        <taxon>Caulobacter</taxon>
    </lineage>
</organism>
<comment type="function">
    <text evidence="1">Involved in transcription antitermination. Required for transcription of ribosomal RNA (rRNA) genes. Binds specifically to the boxA antiterminator sequence of the ribosomal RNA (rrn) operons.</text>
</comment>
<comment type="similarity">
    <text evidence="1">Belongs to the NusB family.</text>
</comment>
<keyword id="KW-1185">Reference proteome</keyword>
<keyword id="KW-0694">RNA-binding</keyword>
<keyword id="KW-0804">Transcription</keyword>
<keyword id="KW-0889">Transcription antitermination</keyword>
<keyword id="KW-0805">Transcription regulation</keyword>
<reference key="1">
    <citation type="journal article" date="2001" name="Proc. Natl. Acad. Sci. U.S.A.">
        <title>Complete genome sequence of Caulobacter crescentus.</title>
        <authorList>
            <person name="Nierman W.C."/>
            <person name="Feldblyum T.V."/>
            <person name="Laub M.T."/>
            <person name="Paulsen I.T."/>
            <person name="Nelson K.E."/>
            <person name="Eisen J.A."/>
            <person name="Heidelberg J.F."/>
            <person name="Alley M.R.K."/>
            <person name="Ohta N."/>
            <person name="Maddock J.R."/>
            <person name="Potocka I."/>
            <person name="Nelson W.C."/>
            <person name="Newton A."/>
            <person name="Stephens C."/>
            <person name="Phadke N.D."/>
            <person name="Ely B."/>
            <person name="DeBoy R.T."/>
            <person name="Dodson R.J."/>
            <person name="Durkin A.S."/>
            <person name="Gwinn M.L."/>
            <person name="Haft D.H."/>
            <person name="Kolonay J.F."/>
            <person name="Smit J."/>
            <person name="Craven M.B."/>
            <person name="Khouri H.M."/>
            <person name="Shetty J."/>
            <person name="Berry K.J."/>
            <person name="Utterback T.R."/>
            <person name="Tran K."/>
            <person name="Wolf A.M."/>
            <person name="Vamathevan J.J."/>
            <person name="Ermolaeva M.D."/>
            <person name="White O."/>
            <person name="Salzberg S.L."/>
            <person name="Venter J.C."/>
            <person name="Shapiro L."/>
            <person name="Fraser C.M."/>
        </authorList>
    </citation>
    <scope>NUCLEOTIDE SEQUENCE [LARGE SCALE GENOMIC DNA]</scope>
    <source>
        <strain>ATCC 19089 / CIP 103742 / CB 15</strain>
    </source>
</reference>
<sequence>MSGNRIQPRSVARLAAVQALYQMEVSGAGVDSVIREFGEHRFDRDVEGEQLAAADETFFADLARGVVTNQAKIDQGIVKRLASGWRLERLDATARAVLRAGAFELMYRSDVPTEVVINEYVEIAKSFFEGPESGFINGALDAIARDARD</sequence>
<protein>
    <recommendedName>
        <fullName evidence="1">Transcription antitermination protein NusB</fullName>
    </recommendedName>
    <alternativeName>
        <fullName evidence="1">Antitermination factor NusB</fullName>
    </alternativeName>
</protein>
<gene>
    <name evidence="1" type="primary">nusB</name>
    <name type="ordered locus">CC_1360</name>
</gene>
<accession>Q9A8J3</accession>
<dbReference type="EMBL" id="AE005673">
    <property type="protein sequence ID" value="AAK23341.1"/>
    <property type="molecule type" value="Genomic_DNA"/>
</dbReference>
<dbReference type="PIR" id="A87418">
    <property type="entry name" value="A87418"/>
</dbReference>
<dbReference type="RefSeq" id="NP_420173.1">
    <property type="nucleotide sequence ID" value="NC_002696.2"/>
</dbReference>
<dbReference type="RefSeq" id="WP_010919237.1">
    <property type="nucleotide sequence ID" value="NC_002696.2"/>
</dbReference>
<dbReference type="SMR" id="Q9A8J3"/>
<dbReference type="STRING" id="190650.CC_1360"/>
<dbReference type="EnsemblBacteria" id="AAK23341">
    <property type="protein sequence ID" value="AAK23341"/>
    <property type="gene ID" value="CC_1360"/>
</dbReference>
<dbReference type="KEGG" id="ccr:CC_1360"/>
<dbReference type="PATRIC" id="fig|190650.5.peg.1390"/>
<dbReference type="eggNOG" id="COG0781">
    <property type="taxonomic scope" value="Bacteria"/>
</dbReference>
<dbReference type="HOGENOM" id="CLU_087843_4_0_5"/>
<dbReference type="BioCyc" id="CAULO:CC1360-MONOMER"/>
<dbReference type="Proteomes" id="UP000001816">
    <property type="component" value="Chromosome"/>
</dbReference>
<dbReference type="GO" id="GO:0005829">
    <property type="term" value="C:cytosol"/>
    <property type="evidence" value="ECO:0007669"/>
    <property type="project" value="TreeGrafter"/>
</dbReference>
<dbReference type="GO" id="GO:0003723">
    <property type="term" value="F:RNA binding"/>
    <property type="evidence" value="ECO:0007669"/>
    <property type="project" value="UniProtKB-UniRule"/>
</dbReference>
<dbReference type="GO" id="GO:0006353">
    <property type="term" value="P:DNA-templated transcription termination"/>
    <property type="evidence" value="ECO:0007669"/>
    <property type="project" value="UniProtKB-UniRule"/>
</dbReference>
<dbReference type="GO" id="GO:0031564">
    <property type="term" value="P:transcription antitermination"/>
    <property type="evidence" value="ECO:0007669"/>
    <property type="project" value="UniProtKB-KW"/>
</dbReference>
<dbReference type="Gene3D" id="1.10.940.10">
    <property type="entry name" value="NusB-like"/>
    <property type="match status" value="1"/>
</dbReference>
<dbReference type="HAMAP" id="MF_00073">
    <property type="entry name" value="NusB"/>
    <property type="match status" value="1"/>
</dbReference>
<dbReference type="InterPro" id="IPR035926">
    <property type="entry name" value="NusB-like_sf"/>
</dbReference>
<dbReference type="InterPro" id="IPR011605">
    <property type="entry name" value="NusB_fam"/>
</dbReference>
<dbReference type="InterPro" id="IPR006027">
    <property type="entry name" value="NusB_RsmB_TIM44"/>
</dbReference>
<dbReference type="NCBIfam" id="TIGR01951">
    <property type="entry name" value="nusB"/>
    <property type="match status" value="1"/>
</dbReference>
<dbReference type="PANTHER" id="PTHR11078:SF3">
    <property type="entry name" value="ANTITERMINATION NUSB DOMAIN-CONTAINING PROTEIN"/>
    <property type="match status" value="1"/>
</dbReference>
<dbReference type="PANTHER" id="PTHR11078">
    <property type="entry name" value="N UTILIZATION SUBSTANCE PROTEIN B-RELATED"/>
    <property type="match status" value="1"/>
</dbReference>
<dbReference type="Pfam" id="PF01029">
    <property type="entry name" value="NusB"/>
    <property type="match status" value="1"/>
</dbReference>
<dbReference type="SUPFAM" id="SSF48013">
    <property type="entry name" value="NusB-like"/>
    <property type="match status" value="1"/>
</dbReference>
<name>NUSB_CAUVC</name>
<proteinExistence type="inferred from homology"/>
<feature type="chain" id="PRO_0000176523" description="Transcription antitermination protein NusB">
    <location>
        <begin position="1"/>
        <end position="149"/>
    </location>
</feature>